<comment type="function">
    <text evidence="1">Low-affinity inorganic phosphate transporter.</text>
</comment>
<comment type="catalytic activity">
    <reaction evidence="1">
        <text>phosphate(in) + H(+)(in) = phosphate(out) + H(+)(out)</text>
        <dbReference type="Rhea" id="RHEA:29939"/>
        <dbReference type="ChEBI" id="CHEBI:15378"/>
        <dbReference type="ChEBI" id="CHEBI:43474"/>
    </reaction>
</comment>
<comment type="subcellular location">
    <subcellularLocation>
        <location evidence="1">Cell inner membrane</location>
        <topology evidence="2">Multi-pass membrane protein</topology>
    </subcellularLocation>
</comment>
<comment type="similarity">
    <text evidence="3">Belongs to the inorganic phosphate transporter (PiT) (TC 2.A.20) family. Pit subfamily.</text>
</comment>
<evidence type="ECO:0000250" key="1">
    <source>
        <dbReference type="UniProtKB" id="P0AFJ7"/>
    </source>
</evidence>
<evidence type="ECO:0000255" key="2"/>
<evidence type="ECO:0000305" key="3"/>
<keyword id="KW-0997">Cell inner membrane</keyword>
<keyword id="KW-1003">Cell membrane</keyword>
<keyword id="KW-0472">Membrane</keyword>
<keyword id="KW-0592">Phosphate transport</keyword>
<keyword id="KW-1185">Reference proteome</keyword>
<keyword id="KW-0769">Symport</keyword>
<keyword id="KW-0812">Transmembrane</keyword>
<keyword id="KW-1133">Transmembrane helix</keyword>
<keyword id="KW-0813">Transport</keyword>
<reference key="1">
    <citation type="journal article" date="2001" name="Nature">
        <title>Genome sequence of enterohaemorrhagic Escherichia coli O157:H7.</title>
        <authorList>
            <person name="Perna N.T."/>
            <person name="Plunkett G. III"/>
            <person name="Burland V."/>
            <person name="Mau B."/>
            <person name="Glasner J.D."/>
            <person name="Rose D.J."/>
            <person name="Mayhew G.F."/>
            <person name="Evans P.S."/>
            <person name="Gregor J."/>
            <person name="Kirkpatrick H.A."/>
            <person name="Posfai G."/>
            <person name="Hackett J."/>
            <person name="Klink S."/>
            <person name="Boutin A."/>
            <person name="Shao Y."/>
            <person name="Miller L."/>
            <person name="Grotbeck E.J."/>
            <person name="Davis N.W."/>
            <person name="Lim A."/>
            <person name="Dimalanta E.T."/>
            <person name="Potamousis K."/>
            <person name="Apodaca J."/>
            <person name="Anantharaman T.S."/>
            <person name="Lin J."/>
            <person name="Yen G."/>
            <person name="Schwartz D.C."/>
            <person name="Welch R.A."/>
            <person name="Blattner F.R."/>
        </authorList>
    </citation>
    <scope>NUCLEOTIDE SEQUENCE [LARGE SCALE GENOMIC DNA]</scope>
    <source>
        <strain>O157:H7 / EDL933 / ATCC 700927 / EHEC</strain>
    </source>
</reference>
<reference key="2">
    <citation type="journal article" date="2001" name="DNA Res.">
        <title>Complete genome sequence of enterohemorrhagic Escherichia coli O157:H7 and genomic comparison with a laboratory strain K-12.</title>
        <authorList>
            <person name="Hayashi T."/>
            <person name="Makino K."/>
            <person name="Ohnishi M."/>
            <person name="Kurokawa K."/>
            <person name="Ishii K."/>
            <person name="Yokoyama K."/>
            <person name="Han C.-G."/>
            <person name="Ohtsubo E."/>
            <person name="Nakayama K."/>
            <person name="Murata T."/>
            <person name="Tanaka M."/>
            <person name="Tobe T."/>
            <person name="Iida T."/>
            <person name="Takami H."/>
            <person name="Honda T."/>
            <person name="Sasakawa C."/>
            <person name="Ogasawara N."/>
            <person name="Yasunaga T."/>
            <person name="Kuhara S."/>
            <person name="Shiba T."/>
            <person name="Hattori M."/>
            <person name="Shinagawa H."/>
        </authorList>
    </citation>
    <scope>NUCLEOTIDE SEQUENCE [LARGE SCALE GENOMIC DNA]</scope>
    <source>
        <strain>O157:H7 / Sakai / RIMD 0509952 / EHEC</strain>
    </source>
</reference>
<name>PITA_ECO57</name>
<protein>
    <recommendedName>
        <fullName evidence="1">Low-affinity inorganic phosphate transporter PitA</fullName>
    </recommendedName>
</protein>
<proteinExistence type="inferred from homology"/>
<sequence>MLHLFAGLDLHTGLLLLLALAFVLFYEAINGFHDTANAVATVIYTRAMRSQLAVVMAAVFNFLGVLLGGLSVAYAIVHMLPTDLLLNMGSSHGLAMVFSMLLAAIIWNLGTWYFGLPASSSHTLIGAIIGIGLTNALMTGTSVVDALNIPKVLSIFGSLIVSPIVGLVFAGGLIFLLRRYWSGTKKRARIHLTPAEREKKDGKKKPPFWTRIALILSAIGVAFSHGANDGQKGIGLVMLVLIGVAPAGFVVNMNATGYEITRTRDAINNVEAYFEQHPALLKQATGADQLVPAPEAGATQPAEFHCHPSNTINALNRLKGMLTTDVESYDKLSLDQRSQMRRIMLCVSDTIDKVVKMPGVSADDQRLLKKLKSDMLSTIEYAPVWIIMAVALALGIGTMIGWRRVATTIGEKIGKKGMTYAQGMSAQMTAAVSIGLASYTGMPVSTTHVLSSSVAGTMVVDGGGLQRKTVTSILMAWVFTLPAAVLLSGGLYWLSLQFL</sequence>
<gene>
    <name type="primary">pitA</name>
    <name type="ordered locus">Z4893</name>
    <name type="ordered locus">ECs4365</name>
</gene>
<accession>P0AFJ9</accession>
<accession>P37308</accession>
<feature type="chain" id="PRO_0000080783" description="Low-affinity inorganic phosphate transporter PitA">
    <location>
        <begin position="1"/>
        <end position="499"/>
    </location>
</feature>
<feature type="topological domain" description="Periplasmic" evidence="3">
    <location>
        <begin position="1"/>
        <end position="4"/>
    </location>
</feature>
<feature type="transmembrane region" description="Helical" evidence="2">
    <location>
        <begin position="5"/>
        <end position="25"/>
    </location>
</feature>
<feature type="topological domain" description="Cytoplasmic" evidence="3">
    <location>
        <begin position="26"/>
        <end position="51"/>
    </location>
</feature>
<feature type="transmembrane region" description="Helical" evidence="2">
    <location>
        <begin position="52"/>
        <end position="72"/>
    </location>
</feature>
<feature type="topological domain" description="Periplasmic" evidence="3">
    <location>
        <begin position="73"/>
        <end position="93"/>
    </location>
</feature>
<feature type="transmembrane region" description="Helical" evidence="2">
    <location>
        <begin position="94"/>
        <end position="114"/>
    </location>
</feature>
<feature type="topological domain" description="Cytoplasmic" evidence="3">
    <location>
        <begin position="115"/>
        <end position="123"/>
    </location>
</feature>
<feature type="transmembrane region" description="Helical" evidence="2">
    <location>
        <begin position="124"/>
        <end position="144"/>
    </location>
</feature>
<feature type="topological domain" description="Periplasmic" evidence="3">
    <location>
        <begin position="145"/>
        <end position="154"/>
    </location>
</feature>
<feature type="transmembrane region" description="Helical" evidence="2">
    <location>
        <begin position="155"/>
        <end position="175"/>
    </location>
</feature>
<feature type="topological domain" description="Cytoplasmic" evidence="3">
    <location>
        <begin position="176"/>
        <end position="206"/>
    </location>
</feature>
<feature type="transmembrane region" description="Helical" evidence="2">
    <location>
        <begin position="207"/>
        <end position="227"/>
    </location>
</feature>
<feature type="topological domain" description="Periplasmic" evidence="3">
    <location>
        <begin position="228"/>
        <end position="232"/>
    </location>
</feature>
<feature type="transmembrane region" description="Helical" evidence="2">
    <location>
        <begin position="233"/>
        <end position="253"/>
    </location>
</feature>
<feature type="topological domain" description="Cytoplasmic" evidence="3">
    <location>
        <begin position="254"/>
        <end position="381"/>
    </location>
</feature>
<feature type="transmembrane region" description="Helical" evidence="2">
    <location>
        <begin position="382"/>
        <end position="402"/>
    </location>
</feature>
<feature type="topological domain" description="Periplasmic" evidence="3">
    <location>
        <begin position="403"/>
        <end position="429"/>
    </location>
</feature>
<feature type="transmembrane region" description="Helical" evidence="2">
    <location>
        <begin position="430"/>
        <end position="450"/>
    </location>
</feature>
<feature type="topological domain" description="Cytoplasmic" evidence="3">
    <location>
        <begin position="451"/>
        <end position="472"/>
    </location>
</feature>
<feature type="transmembrane region" description="Helical" evidence="2">
    <location>
        <begin position="473"/>
        <end position="493"/>
    </location>
</feature>
<feature type="topological domain" description="Periplasmic" evidence="1">
    <location>
        <begin position="494"/>
        <end position="499"/>
    </location>
</feature>
<dbReference type="EMBL" id="AE005174">
    <property type="protein sequence ID" value="AAG58625.1"/>
    <property type="molecule type" value="Genomic_DNA"/>
</dbReference>
<dbReference type="EMBL" id="BA000007">
    <property type="protein sequence ID" value="BAB37788.1"/>
    <property type="molecule type" value="Genomic_DNA"/>
</dbReference>
<dbReference type="PIR" id="E86020">
    <property type="entry name" value="E86020"/>
</dbReference>
<dbReference type="PIR" id="E91174">
    <property type="entry name" value="E91174"/>
</dbReference>
<dbReference type="RefSeq" id="NP_312392.1">
    <property type="nucleotide sequence ID" value="NC_002695.1"/>
</dbReference>
<dbReference type="RefSeq" id="WP_000902780.1">
    <property type="nucleotide sequence ID" value="NZ_VOAI01000004.1"/>
</dbReference>
<dbReference type="SMR" id="P0AFJ9"/>
<dbReference type="STRING" id="155864.Z4893"/>
<dbReference type="GeneID" id="913986"/>
<dbReference type="GeneID" id="93778500"/>
<dbReference type="KEGG" id="ece:Z4893"/>
<dbReference type="KEGG" id="ecs:ECs_4365"/>
<dbReference type="PATRIC" id="fig|386585.9.peg.4559"/>
<dbReference type="eggNOG" id="COG0306">
    <property type="taxonomic scope" value="Bacteria"/>
</dbReference>
<dbReference type="HOGENOM" id="CLU_015355_4_0_6"/>
<dbReference type="OMA" id="GVNWQKA"/>
<dbReference type="Proteomes" id="UP000000558">
    <property type="component" value="Chromosome"/>
</dbReference>
<dbReference type="Proteomes" id="UP000002519">
    <property type="component" value="Chromosome"/>
</dbReference>
<dbReference type="GO" id="GO:0005886">
    <property type="term" value="C:plasma membrane"/>
    <property type="evidence" value="ECO:0007669"/>
    <property type="project" value="UniProtKB-SubCell"/>
</dbReference>
<dbReference type="GO" id="GO:0005315">
    <property type="term" value="F:phosphate transmembrane transporter activity"/>
    <property type="evidence" value="ECO:0007669"/>
    <property type="project" value="InterPro"/>
</dbReference>
<dbReference type="GO" id="GO:0015293">
    <property type="term" value="F:symporter activity"/>
    <property type="evidence" value="ECO:0007669"/>
    <property type="project" value="UniProtKB-KW"/>
</dbReference>
<dbReference type="GO" id="GO:0035435">
    <property type="term" value="P:phosphate ion transmembrane transport"/>
    <property type="evidence" value="ECO:0007669"/>
    <property type="project" value="TreeGrafter"/>
</dbReference>
<dbReference type="InterPro" id="IPR047818">
    <property type="entry name" value="Phos_trans_PitA_PitB"/>
</dbReference>
<dbReference type="InterPro" id="IPR001204">
    <property type="entry name" value="Phos_transporter"/>
</dbReference>
<dbReference type="NCBIfam" id="NF033774">
    <property type="entry name" value="phos_trans_PitA"/>
    <property type="match status" value="1"/>
</dbReference>
<dbReference type="PANTHER" id="PTHR11101:SF65">
    <property type="entry name" value="LOW-AFFINITY INORGANIC PHOSPHATE TRANSPORTER PITA-RELATED"/>
    <property type="match status" value="1"/>
</dbReference>
<dbReference type="PANTHER" id="PTHR11101">
    <property type="entry name" value="PHOSPHATE TRANSPORTER"/>
    <property type="match status" value="1"/>
</dbReference>
<dbReference type="Pfam" id="PF01384">
    <property type="entry name" value="PHO4"/>
    <property type="match status" value="1"/>
</dbReference>
<organism>
    <name type="scientific">Escherichia coli O157:H7</name>
    <dbReference type="NCBI Taxonomy" id="83334"/>
    <lineage>
        <taxon>Bacteria</taxon>
        <taxon>Pseudomonadati</taxon>
        <taxon>Pseudomonadota</taxon>
        <taxon>Gammaproteobacteria</taxon>
        <taxon>Enterobacterales</taxon>
        <taxon>Enterobacteriaceae</taxon>
        <taxon>Escherichia</taxon>
    </lineage>
</organism>